<accession>A3DLR9</accession>
<gene>
    <name evidence="1" type="primary">sucC</name>
    <name type="ordered locus">Smar_0470</name>
</gene>
<dbReference type="EC" id="6.2.1.5" evidence="1"/>
<dbReference type="EMBL" id="CP000575">
    <property type="protein sequence ID" value="ABN69579.1"/>
    <property type="molecule type" value="Genomic_DNA"/>
</dbReference>
<dbReference type="RefSeq" id="WP_011838770.1">
    <property type="nucleotide sequence ID" value="NC_009033.1"/>
</dbReference>
<dbReference type="SMR" id="A3DLR9"/>
<dbReference type="STRING" id="399550.Smar_0470"/>
<dbReference type="GeneID" id="4907266"/>
<dbReference type="KEGG" id="smr:Smar_0470"/>
<dbReference type="eggNOG" id="arCOG01337">
    <property type="taxonomic scope" value="Archaea"/>
</dbReference>
<dbReference type="HOGENOM" id="CLU_037430_0_2_2"/>
<dbReference type="OrthoDB" id="146449at2157"/>
<dbReference type="UniPathway" id="UPA00223">
    <property type="reaction ID" value="UER00999"/>
</dbReference>
<dbReference type="Proteomes" id="UP000000254">
    <property type="component" value="Chromosome"/>
</dbReference>
<dbReference type="GO" id="GO:0042709">
    <property type="term" value="C:succinate-CoA ligase complex"/>
    <property type="evidence" value="ECO:0007669"/>
    <property type="project" value="TreeGrafter"/>
</dbReference>
<dbReference type="GO" id="GO:0005524">
    <property type="term" value="F:ATP binding"/>
    <property type="evidence" value="ECO:0007669"/>
    <property type="project" value="UniProtKB-UniRule"/>
</dbReference>
<dbReference type="GO" id="GO:0000287">
    <property type="term" value="F:magnesium ion binding"/>
    <property type="evidence" value="ECO:0007669"/>
    <property type="project" value="UniProtKB-UniRule"/>
</dbReference>
<dbReference type="GO" id="GO:0004775">
    <property type="term" value="F:succinate-CoA ligase (ADP-forming) activity"/>
    <property type="evidence" value="ECO:0007669"/>
    <property type="project" value="UniProtKB-UniRule"/>
</dbReference>
<dbReference type="GO" id="GO:0004776">
    <property type="term" value="F:succinate-CoA ligase (GDP-forming) activity"/>
    <property type="evidence" value="ECO:0007669"/>
    <property type="project" value="RHEA"/>
</dbReference>
<dbReference type="GO" id="GO:0006104">
    <property type="term" value="P:succinyl-CoA metabolic process"/>
    <property type="evidence" value="ECO:0007669"/>
    <property type="project" value="TreeGrafter"/>
</dbReference>
<dbReference type="GO" id="GO:0006099">
    <property type="term" value="P:tricarboxylic acid cycle"/>
    <property type="evidence" value="ECO:0007669"/>
    <property type="project" value="UniProtKB-UniRule"/>
</dbReference>
<dbReference type="FunFam" id="3.30.470.20:FF:000002">
    <property type="entry name" value="Succinate--CoA ligase [ADP-forming] subunit beta"/>
    <property type="match status" value="1"/>
</dbReference>
<dbReference type="FunFam" id="3.40.50.261:FF:000007">
    <property type="entry name" value="Succinate--CoA ligase [ADP-forming] subunit beta"/>
    <property type="match status" value="1"/>
</dbReference>
<dbReference type="Gene3D" id="3.30.1490.20">
    <property type="entry name" value="ATP-grasp fold, A domain"/>
    <property type="match status" value="1"/>
</dbReference>
<dbReference type="Gene3D" id="3.30.470.20">
    <property type="entry name" value="ATP-grasp fold, B domain"/>
    <property type="match status" value="1"/>
</dbReference>
<dbReference type="Gene3D" id="3.40.50.261">
    <property type="entry name" value="Succinyl-CoA synthetase domains"/>
    <property type="match status" value="1"/>
</dbReference>
<dbReference type="HAMAP" id="MF_00558">
    <property type="entry name" value="Succ_CoA_beta"/>
    <property type="match status" value="1"/>
</dbReference>
<dbReference type="InterPro" id="IPR011761">
    <property type="entry name" value="ATP-grasp"/>
</dbReference>
<dbReference type="InterPro" id="IPR013650">
    <property type="entry name" value="ATP-grasp_succ-CoA_synth-type"/>
</dbReference>
<dbReference type="InterPro" id="IPR013815">
    <property type="entry name" value="ATP_grasp_subdomain_1"/>
</dbReference>
<dbReference type="InterPro" id="IPR017866">
    <property type="entry name" value="Succ-CoA_synthase_bsu_CS"/>
</dbReference>
<dbReference type="InterPro" id="IPR005811">
    <property type="entry name" value="SUCC_ACL_C"/>
</dbReference>
<dbReference type="InterPro" id="IPR005809">
    <property type="entry name" value="Succ_CoA_ligase-like_bsu"/>
</dbReference>
<dbReference type="InterPro" id="IPR016102">
    <property type="entry name" value="Succinyl-CoA_synth-like"/>
</dbReference>
<dbReference type="NCBIfam" id="NF001913">
    <property type="entry name" value="PRK00696.1"/>
    <property type="match status" value="1"/>
</dbReference>
<dbReference type="NCBIfam" id="TIGR01016">
    <property type="entry name" value="sucCoAbeta"/>
    <property type="match status" value="1"/>
</dbReference>
<dbReference type="PANTHER" id="PTHR11815:SF10">
    <property type="entry name" value="SUCCINATE--COA LIGASE [GDP-FORMING] SUBUNIT BETA, MITOCHONDRIAL"/>
    <property type="match status" value="1"/>
</dbReference>
<dbReference type="PANTHER" id="PTHR11815">
    <property type="entry name" value="SUCCINYL-COA SYNTHETASE BETA CHAIN"/>
    <property type="match status" value="1"/>
</dbReference>
<dbReference type="Pfam" id="PF08442">
    <property type="entry name" value="ATP-grasp_2"/>
    <property type="match status" value="1"/>
</dbReference>
<dbReference type="Pfam" id="PF00549">
    <property type="entry name" value="Ligase_CoA"/>
    <property type="match status" value="1"/>
</dbReference>
<dbReference type="PIRSF" id="PIRSF001554">
    <property type="entry name" value="SucCS_beta"/>
    <property type="match status" value="1"/>
</dbReference>
<dbReference type="SUPFAM" id="SSF56059">
    <property type="entry name" value="Glutathione synthetase ATP-binding domain-like"/>
    <property type="match status" value="1"/>
</dbReference>
<dbReference type="SUPFAM" id="SSF52210">
    <property type="entry name" value="Succinyl-CoA synthetase domains"/>
    <property type="match status" value="1"/>
</dbReference>
<dbReference type="PROSITE" id="PS50975">
    <property type="entry name" value="ATP_GRASP"/>
    <property type="match status" value="1"/>
</dbReference>
<dbReference type="PROSITE" id="PS01217">
    <property type="entry name" value="SUCCINYL_COA_LIG_3"/>
    <property type="match status" value="1"/>
</dbReference>
<reference key="1">
    <citation type="journal article" date="2009" name="BMC Genomics">
        <title>The complete genome sequence of Staphylothermus marinus reveals differences in sulfur metabolism among heterotrophic Crenarchaeota.</title>
        <authorList>
            <person name="Anderson I.J."/>
            <person name="Dharmarajan L."/>
            <person name="Rodriguez J."/>
            <person name="Hooper S."/>
            <person name="Porat I."/>
            <person name="Ulrich L.E."/>
            <person name="Elkins J.G."/>
            <person name="Mavromatis K."/>
            <person name="Sun H."/>
            <person name="Land M."/>
            <person name="Lapidus A."/>
            <person name="Lucas S."/>
            <person name="Barry K."/>
            <person name="Huber H."/>
            <person name="Zhulin I.B."/>
            <person name="Whitman W.B."/>
            <person name="Mukhopadhyay B."/>
            <person name="Woese C."/>
            <person name="Bristow J."/>
            <person name="Kyrpides N."/>
        </authorList>
    </citation>
    <scope>NUCLEOTIDE SEQUENCE [LARGE SCALE GENOMIC DNA]</scope>
    <source>
        <strain>ATCC 43588 / DSM 3639 / JCM 9404 / F1</strain>
    </source>
</reference>
<reference key="2">
    <citation type="journal article" date="2009" name="Stand. Genomic Sci.">
        <title>Complete genome sequence of Staphylothermus marinus Stetter and Fiala 1986 type strain F1.</title>
        <authorList>
            <person name="Anderson I.J."/>
            <person name="Sun H."/>
            <person name="Lapidus A."/>
            <person name="Copeland A."/>
            <person name="Glavina Del Rio T."/>
            <person name="Tice H."/>
            <person name="Dalin E."/>
            <person name="Lucas S."/>
            <person name="Barry K."/>
            <person name="Land M."/>
            <person name="Richardson P."/>
            <person name="Huber H."/>
            <person name="Kyrpides N.C."/>
        </authorList>
    </citation>
    <scope>NUCLEOTIDE SEQUENCE [LARGE SCALE GENOMIC DNA]</scope>
    <source>
        <strain>ATCC 43588 / DSM 3639 / JCM 9404 / F1</strain>
    </source>
</reference>
<sequence length="379" mass="42220">MKLYEFEAKEIAKNNGIPVPRGGIAKTPEEARIVAEKIGGEVVLKAQVLVGRRGLAGGVLFASNSLEAEKVARELFSKRVRGEKVELILVEEKICIDKEYYLSLTIDRSNREIVYLVSPLGGVEIEELVKKYPDKLLRIRVDPVIGYKPYMSRLAAKFLGLPKELWPSMHKIMNSMYNIMKNYDADLVEFNPLVKTCSNEIVAVDAKITIDDNSLYRHIEFAEKYGRELSEMEAIAKKLGFSYVELDGDIGIMCNGAGLTMATMDMVAYYGGRPANFLDIGGGASRERVREAAKLLLKHDKVKVLLVNIFGGITRCNEVARGIIEAVEETGVKKPIVIRLLGTNEEIGRRLLEEKGYSVFSEADDAVKKAVEIAKNLSR</sequence>
<proteinExistence type="inferred from homology"/>
<keyword id="KW-0067">ATP-binding</keyword>
<keyword id="KW-0436">Ligase</keyword>
<keyword id="KW-0460">Magnesium</keyword>
<keyword id="KW-0479">Metal-binding</keyword>
<keyword id="KW-0547">Nucleotide-binding</keyword>
<keyword id="KW-1185">Reference proteome</keyword>
<keyword id="KW-0816">Tricarboxylic acid cycle</keyword>
<protein>
    <recommendedName>
        <fullName evidence="1">Succinate--CoA ligase [ADP-forming] subunit beta</fullName>
        <ecNumber evidence="1">6.2.1.5</ecNumber>
    </recommendedName>
    <alternativeName>
        <fullName evidence="1">Succinyl-CoA synthetase subunit beta</fullName>
        <shortName evidence="1">SCS-beta</shortName>
    </alternativeName>
</protein>
<evidence type="ECO:0000255" key="1">
    <source>
        <dbReference type="HAMAP-Rule" id="MF_00558"/>
    </source>
</evidence>
<comment type="function">
    <text evidence="1">Succinyl-CoA synthetase functions in the citric acid cycle (TCA), coupling the hydrolysis of succinyl-CoA to the synthesis of either ATP or GTP and thus represents the only step of substrate-level phosphorylation in the TCA. The beta subunit provides nucleotide specificity of the enzyme and binds the substrate succinate, while the binding sites for coenzyme A and phosphate are found in the alpha subunit.</text>
</comment>
<comment type="catalytic activity">
    <reaction evidence="1">
        <text>succinate + ATP + CoA = succinyl-CoA + ADP + phosphate</text>
        <dbReference type="Rhea" id="RHEA:17661"/>
        <dbReference type="ChEBI" id="CHEBI:30031"/>
        <dbReference type="ChEBI" id="CHEBI:30616"/>
        <dbReference type="ChEBI" id="CHEBI:43474"/>
        <dbReference type="ChEBI" id="CHEBI:57287"/>
        <dbReference type="ChEBI" id="CHEBI:57292"/>
        <dbReference type="ChEBI" id="CHEBI:456216"/>
        <dbReference type="EC" id="6.2.1.5"/>
    </reaction>
    <physiologicalReaction direction="right-to-left" evidence="1">
        <dbReference type="Rhea" id="RHEA:17663"/>
    </physiologicalReaction>
</comment>
<comment type="catalytic activity">
    <reaction evidence="1">
        <text>GTP + succinate + CoA = succinyl-CoA + GDP + phosphate</text>
        <dbReference type="Rhea" id="RHEA:22120"/>
        <dbReference type="ChEBI" id="CHEBI:30031"/>
        <dbReference type="ChEBI" id="CHEBI:37565"/>
        <dbReference type="ChEBI" id="CHEBI:43474"/>
        <dbReference type="ChEBI" id="CHEBI:57287"/>
        <dbReference type="ChEBI" id="CHEBI:57292"/>
        <dbReference type="ChEBI" id="CHEBI:58189"/>
    </reaction>
    <physiologicalReaction direction="right-to-left" evidence="1">
        <dbReference type="Rhea" id="RHEA:22122"/>
    </physiologicalReaction>
</comment>
<comment type="cofactor">
    <cofactor evidence="1">
        <name>Mg(2+)</name>
        <dbReference type="ChEBI" id="CHEBI:18420"/>
    </cofactor>
    <text evidence="1">Binds 1 Mg(2+) ion per subunit.</text>
</comment>
<comment type="pathway">
    <text evidence="1">Carbohydrate metabolism; tricarboxylic acid cycle; succinate from succinyl-CoA (ligase route): step 1/1.</text>
</comment>
<comment type="subunit">
    <text evidence="1">Heterotetramer of two alpha and two beta subunits.</text>
</comment>
<comment type="similarity">
    <text evidence="1">Belongs to the succinate/malate CoA ligase beta subunit family.</text>
</comment>
<feature type="chain" id="PRO_1000082249" description="Succinate--CoA ligase [ADP-forming] subunit beta">
    <location>
        <begin position="1"/>
        <end position="379"/>
    </location>
</feature>
<feature type="domain" description="ATP-grasp" evidence="1">
    <location>
        <begin position="9"/>
        <end position="235"/>
    </location>
</feature>
<feature type="binding site" evidence="1">
    <location>
        <position position="45"/>
    </location>
    <ligand>
        <name>ATP</name>
        <dbReference type="ChEBI" id="CHEBI:30616"/>
    </ligand>
</feature>
<feature type="binding site" evidence="1">
    <location>
        <position position="91"/>
    </location>
    <ligand>
        <name>ATP</name>
        <dbReference type="ChEBI" id="CHEBI:30616"/>
    </ligand>
</feature>
<feature type="binding site" evidence="1">
    <location>
        <position position="94"/>
    </location>
    <ligand>
        <name>ATP</name>
        <dbReference type="ChEBI" id="CHEBI:30616"/>
    </ligand>
</feature>
<feature type="binding site" evidence="1">
    <location>
        <position position="99"/>
    </location>
    <ligand>
        <name>ATP</name>
        <dbReference type="ChEBI" id="CHEBI:30616"/>
    </ligand>
</feature>
<feature type="binding site" evidence="1">
    <location>
        <position position="191"/>
    </location>
    <ligand>
        <name>Mg(2+)</name>
        <dbReference type="ChEBI" id="CHEBI:18420"/>
    </ligand>
</feature>
<feature type="binding site" evidence="1">
    <location>
        <position position="205"/>
    </location>
    <ligand>
        <name>Mg(2+)</name>
        <dbReference type="ChEBI" id="CHEBI:18420"/>
    </ligand>
</feature>
<feature type="binding site" evidence="1">
    <location>
        <position position="255"/>
    </location>
    <ligand>
        <name>substrate</name>
        <note>ligand shared with subunit alpha</note>
    </ligand>
</feature>
<feature type="binding site" evidence="1">
    <location>
        <begin position="312"/>
        <end position="314"/>
    </location>
    <ligand>
        <name>substrate</name>
        <note>ligand shared with subunit alpha</note>
    </ligand>
</feature>
<organism>
    <name type="scientific">Staphylothermus marinus (strain ATCC 43588 / DSM 3639 / JCM 9404 / F1)</name>
    <dbReference type="NCBI Taxonomy" id="399550"/>
    <lineage>
        <taxon>Archaea</taxon>
        <taxon>Thermoproteota</taxon>
        <taxon>Thermoprotei</taxon>
        <taxon>Desulfurococcales</taxon>
        <taxon>Desulfurococcaceae</taxon>
        <taxon>Staphylothermus</taxon>
    </lineage>
</organism>
<name>SUCC_STAMF</name>